<feature type="chain" id="PRO_0000150279" description="Cysteine desulfurase IscS">
    <location>
        <begin position="1"/>
        <end position="404"/>
    </location>
</feature>
<feature type="active site" description="Cysteine persulfide intermediate" evidence="1">
    <location>
        <position position="328"/>
    </location>
</feature>
<feature type="binding site" evidence="1">
    <location>
        <begin position="75"/>
        <end position="76"/>
    </location>
    <ligand>
        <name>pyridoxal 5'-phosphate</name>
        <dbReference type="ChEBI" id="CHEBI:597326"/>
    </ligand>
</feature>
<feature type="binding site" evidence="1">
    <location>
        <position position="155"/>
    </location>
    <ligand>
        <name>pyridoxal 5'-phosphate</name>
        <dbReference type="ChEBI" id="CHEBI:597326"/>
    </ligand>
</feature>
<feature type="binding site" evidence="1">
    <location>
        <position position="183"/>
    </location>
    <ligand>
        <name>pyridoxal 5'-phosphate</name>
        <dbReference type="ChEBI" id="CHEBI:597326"/>
    </ligand>
</feature>
<feature type="binding site" evidence="1">
    <location>
        <begin position="203"/>
        <end position="205"/>
    </location>
    <ligand>
        <name>pyridoxal 5'-phosphate</name>
        <dbReference type="ChEBI" id="CHEBI:597326"/>
    </ligand>
</feature>
<feature type="binding site" evidence="1">
    <location>
        <position position="243"/>
    </location>
    <ligand>
        <name>pyridoxal 5'-phosphate</name>
        <dbReference type="ChEBI" id="CHEBI:597326"/>
    </ligand>
</feature>
<feature type="binding site" description="via persulfide group" evidence="1">
    <location>
        <position position="328"/>
    </location>
    <ligand>
        <name>[2Fe-2S] cluster</name>
        <dbReference type="ChEBI" id="CHEBI:190135"/>
        <note>ligand shared with IscU</note>
    </ligand>
</feature>
<feature type="modified residue" description="N6-(pyridoxal phosphate)lysine" evidence="1">
    <location>
        <position position="206"/>
    </location>
</feature>
<name>ISCS_SALTY</name>
<proteinExistence type="inferred from homology"/>
<sequence length="404" mass="45092">MKLPIYLDYSATTPVDPRVAEKMMQFLTLDGTFGNPASRSHRFGWQAEEAVDIARNQIAELVGADPREIVFTSGATESDNLAIKGAANFYQKKGKHIITSKTEHKAVLDTCRQLEREGFEVTYLAPQRNGIIDLNELEAAMRDDTILVSIMHVNNEIGVVQDIATIGEMCRARGIIYHVDATQSVGKLPIDLSQLKVDLMSFSGHKIYGPKGIGALYVRRKPRIRIEAQMHGGGHERGMRSGTLPVHQIVGMGEAYRIAKEEMETEMARLRGLRNRLWNGIKDIEEVYLNGDLEQGAPNILNVSFNYVEGESLIMALKDLAVSSGSACTSASLEPSYVLRALGMNDELAHSSIRFSLGRFTTEEEIDYTIDLVRKSIGRLRDLSPLWEMYKQGVDLNSIEWAHH</sequence>
<accession>Q8ZN40</accession>
<evidence type="ECO:0000255" key="1">
    <source>
        <dbReference type="HAMAP-Rule" id="MF_00331"/>
    </source>
</evidence>
<protein>
    <recommendedName>
        <fullName evidence="1">Cysteine desulfurase IscS</fullName>
        <ecNumber evidence="1">2.8.1.7</ecNumber>
    </recommendedName>
</protein>
<organism>
    <name type="scientific">Salmonella typhimurium (strain LT2 / SGSC1412 / ATCC 700720)</name>
    <dbReference type="NCBI Taxonomy" id="99287"/>
    <lineage>
        <taxon>Bacteria</taxon>
        <taxon>Pseudomonadati</taxon>
        <taxon>Pseudomonadota</taxon>
        <taxon>Gammaproteobacteria</taxon>
        <taxon>Enterobacterales</taxon>
        <taxon>Enterobacteriaceae</taxon>
        <taxon>Salmonella</taxon>
    </lineage>
</organism>
<dbReference type="EC" id="2.8.1.7" evidence="1"/>
<dbReference type="EMBL" id="AE006468">
    <property type="protein sequence ID" value="AAL21437.1"/>
    <property type="molecule type" value="Genomic_DNA"/>
</dbReference>
<dbReference type="RefSeq" id="WP_000775263.1">
    <property type="nucleotide sequence ID" value="NC_003197.2"/>
</dbReference>
<dbReference type="SMR" id="Q8ZN40"/>
<dbReference type="STRING" id="99287.STM2543"/>
<dbReference type="PaxDb" id="99287-STM2543"/>
<dbReference type="KEGG" id="stm:STM2543"/>
<dbReference type="PATRIC" id="fig|99287.12.peg.2683"/>
<dbReference type="HOGENOM" id="CLU_003433_0_2_6"/>
<dbReference type="OMA" id="KGLYWAR"/>
<dbReference type="PhylomeDB" id="Q8ZN40"/>
<dbReference type="BioCyc" id="SENT99287:STM2543-MONOMER"/>
<dbReference type="UniPathway" id="UPA00266"/>
<dbReference type="Proteomes" id="UP000001014">
    <property type="component" value="Chromosome"/>
</dbReference>
<dbReference type="GO" id="GO:1990221">
    <property type="term" value="C:L-cysteine desulfurase complex"/>
    <property type="evidence" value="ECO:0007669"/>
    <property type="project" value="UniProtKB-ARBA"/>
</dbReference>
<dbReference type="GO" id="GO:0051537">
    <property type="term" value="F:2 iron, 2 sulfur cluster binding"/>
    <property type="evidence" value="ECO:0007669"/>
    <property type="project" value="UniProtKB-UniRule"/>
</dbReference>
<dbReference type="GO" id="GO:0031071">
    <property type="term" value="F:cysteine desulfurase activity"/>
    <property type="evidence" value="ECO:0007669"/>
    <property type="project" value="UniProtKB-UniRule"/>
</dbReference>
<dbReference type="GO" id="GO:0046872">
    <property type="term" value="F:metal ion binding"/>
    <property type="evidence" value="ECO:0007669"/>
    <property type="project" value="UniProtKB-KW"/>
</dbReference>
<dbReference type="GO" id="GO:0030170">
    <property type="term" value="F:pyridoxal phosphate binding"/>
    <property type="evidence" value="ECO:0007669"/>
    <property type="project" value="UniProtKB-UniRule"/>
</dbReference>
<dbReference type="GO" id="GO:0044571">
    <property type="term" value="P:[2Fe-2S] cluster assembly"/>
    <property type="evidence" value="ECO:0007669"/>
    <property type="project" value="UniProtKB-UniRule"/>
</dbReference>
<dbReference type="FunFam" id="3.40.640.10:FF:000003">
    <property type="entry name" value="Cysteine desulfurase IscS"/>
    <property type="match status" value="1"/>
</dbReference>
<dbReference type="FunFam" id="3.90.1150.10:FF:000002">
    <property type="entry name" value="Cysteine desulfurase IscS"/>
    <property type="match status" value="1"/>
</dbReference>
<dbReference type="Gene3D" id="3.90.1150.10">
    <property type="entry name" value="Aspartate Aminotransferase, domain 1"/>
    <property type="match status" value="1"/>
</dbReference>
<dbReference type="Gene3D" id="3.40.640.10">
    <property type="entry name" value="Type I PLP-dependent aspartate aminotransferase-like (Major domain)"/>
    <property type="match status" value="1"/>
</dbReference>
<dbReference type="HAMAP" id="MF_00331">
    <property type="entry name" value="Cys_desulf_IscS"/>
    <property type="match status" value="1"/>
</dbReference>
<dbReference type="InterPro" id="IPR000192">
    <property type="entry name" value="Aminotrans_V_dom"/>
</dbReference>
<dbReference type="InterPro" id="IPR020578">
    <property type="entry name" value="Aminotrans_V_PyrdxlP_BS"/>
</dbReference>
<dbReference type="InterPro" id="IPR010240">
    <property type="entry name" value="Cys_deSase_IscS"/>
</dbReference>
<dbReference type="InterPro" id="IPR016454">
    <property type="entry name" value="Cysteine_dSase"/>
</dbReference>
<dbReference type="InterPro" id="IPR015424">
    <property type="entry name" value="PyrdxlP-dep_Trfase"/>
</dbReference>
<dbReference type="InterPro" id="IPR015421">
    <property type="entry name" value="PyrdxlP-dep_Trfase_major"/>
</dbReference>
<dbReference type="InterPro" id="IPR015422">
    <property type="entry name" value="PyrdxlP-dep_Trfase_small"/>
</dbReference>
<dbReference type="NCBIfam" id="TIGR02006">
    <property type="entry name" value="IscS"/>
    <property type="match status" value="1"/>
</dbReference>
<dbReference type="NCBIfam" id="NF002806">
    <property type="entry name" value="PRK02948.1"/>
    <property type="match status" value="1"/>
</dbReference>
<dbReference type="NCBIfam" id="NF010611">
    <property type="entry name" value="PRK14012.1"/>
    <property type="match status" value="1"/>
</dbReference>
<dbReference type="PANTHER" id="PTHR11601:SF34">
    <property type="entry name" value="CYSTEINE DESULFURASE"/>
    <property type="match status" value="1"/>
</dbReference>
<dbReference type="PANTHER" id="PTHR11601">
    <property type="entry name" value="CYSTEINE DESULFURYLASE FAMILY MEMBER"/>
    <property type="match status" value="1"/>
</dbReference>
<dbReference type="Pfam" id="PF00266">
    <property type="entry name" value="Aminotran_5"/>
    <property type="match status" value="1"/>
</dbReference>
<dbReference type="PIRSF" id="PIRSF005572">
    <property type="entry name" value="NifS"/>
    <property type="match status" value="1"/>
</dbReference>
<dbReference type="SUPFAM" id="SSF53383">
    <property type="entry name" value="PLP-dependent transferases"/>
    <property type="match status" value="1"/>
</dbReference>
<dbReference type="PROSITE" id="PS00595">
    <property type="entry name" value="AA_TRANSFER_CLASS_5"/>
    <property type="match status" value="1"/>
</dbReference>
<gene>
    <name evidence="1" type="primary">iscS</name>
    <name type="ordered locus">STM2543</name>
</gene>
<keyword id="KW-0001">2Fe-2S</keyword>
<keyword id="KW-0963">Cytoplasm</keyword>
<keyword id="KW-0408">Iron</keyword>
<keyword id="KW-0411">Iron-sulfur</keyword>
<keyword id="KW-0479">Metal-binding</keyword>
<keyword id="KW-0663">Pyridoxal phosphate</keyword>
<keyword id="KW-1185">Reference proteome</keyword>
<keyword id="KW-0808">Transferase</keyword>
<comment type="function">
    <text evidence="1">Master enzyme that delivers sulfur to a number of partners involved in Fe-S cluster assembly, tRNA modification or cofactor biosynthesis. Catalyzes the removal of elemental sulfur and selenium atoms from cysteine and selenocysteine to produce alanine. Functions as a sulfur delivery protein for Fe-S cluster synthesis onto IscU, an Fe-S scaffold assembly protein, as well as other S acceptor proteins. Also functions as a selenium delivery protein in the pathway for the biosynthesis of selenophosphate.</text>
</comment>
<comment type="catalytic activity">
    <reaction evidence="1">
        <text>(sulfur carrier)-H + L-cysteine = (sulfur carrier)-SH + L-alanine</text>
        <dbReference type="Rhea" id="RHEA:43892"/>
        <dbReference type="Rhea" id="RHEA-COMP:14737"/>
        <dbReference type="Rhea" id="RHEA-COMP:14739"/>
        <dbReference type="ChEBI" id="CHEBI:29917"/>
        <dbReference type="ChEBI" id="CHEBI:35235"/>
        <dbReference type="ChEBI" id="CHEBI:57972"/>
        <dbReference type="ChEBI" id="CHEBI:64428"/>
        <dbReference type="EC" id="2.8.1.7"/>
    </reaction>
</comment>
<comment type="cofactor">
    <cofactor evidence="1">
        <name>pyridoxal 5'-phosphate</name>
        <dbReference type="ChEBI" id="CHEBI:597326"/>
    </cofactor>
</comment>
<comment type="pathway">
    <text evidence="1">Cofactor biosynthesis; iron-sulfur cluster biosynthesis.</text>
</comment>
<comment type="subunit">
    <text evidence="1">Homodimer. Forms a heterotetramer with IscU, interacts with other sulfur acceptors.</text>
</comment>
<comment type="subcellular location">
    <subcellularLocation>
        <location evidence="1">Cytoplasm</location>
    </subcellularLocation>
</comment>
<comment type="similarity">
    <text evidence="1">Belongs to the class-V pyridoxal-phosphate-dependent aminotransferase family. NifS/IscS subfamily.</text>
</comment>
<reference key="1">
    <citation type="journal article" date="2001" name="Nature">
        <title>Complete genome sequence of Salmonella enterica serovar Typhimurium LT2.</title>
        <authorList>
            <person name="McClelland M."/>
            <person name="Sanderson K.E."/>
            <person name="Spieth J."/>
            <person name="Clifton S.W."/>
            <person name="Latreille P."/>
            <person name="Courtney L."/>
            <person name="Porwollik S."/>
            <person name="Ali J."/>
            <person name="Dante M."/>
            <person name="Du F."/>
            <person name="Hou S."/>
            <person name="Layman D."/>
            <person name="Leonard S."/>
            <person name="Nguyen C."/>
            <person name="Scott K."/>
            <person name="Holmes A."/>
            <person name="Grewal N."/>
            <person name="Mulvaney E."/>
            <person name="Ryan E."/>
            <person name="Sun H."/>
            <person name="Florea L."/>
            <person name="Miller W."/>
            <person name="Stoneking T."/>
            <person name="Nhan M."/>
            <person name="Waterston R."/>
            <person name="Wilson R.K."/>
        </authorList>
    </citation>
    <scope>NUCLEOTIDE SEQUENCE [LARGE SCALE GENOMIC DNA]</scope>
    <source>
        <strain>LT2 / SGSC1412 / ATCC 700720</strain>
    </source>
</reference>